<evidence type="ECO:0000250" key="1">
    <source>
        <dbReference type="UniProtKB" id="P18858"/>
    </source>
</evidence>
<evidence type="ECO:0000250" key="2">
    <source>
        <dbReference type="UniProtKB" id="P49917"/>
    </source>
</evidence>
<evidence type="ECO:0000255" key="3"/>
<evidence type="ECO:0000255" key="4">
    <source>
        <dbReference type="PROSITE-ProRule" id="PRU00033"/>
    </source>
</evidence>
<evidence type="ECO:0000255" key="5">
    <source>
        <dbReference type="PROSITE-ProRule" id="PRU10135"/>
    </source>
</evidence>
<evidence type="ECO:0000305" key="6"/>
<dbReference type="EC" id="6.5.1.1" evidence="5"/>
<dbReference type="EMBL" id="CR860475">
    <property type="protein sequence ID" value="CAH92597.1"/>
    <property type="molecule type" value="mRNA"/>
</dbReference>
<dbReference type="RefSeq" id="NP_001126522.1">
    <property type="nucleotide sequence ID" value="NM_001133050.2"/>
</dbReference>
<dbReference type="RefSeq" id="XP_024113395.2">
    <property type="nucleotide sequence ID" value="XM_024257627.3"/>
</dbReference>
<dbReference type="RefSeq" id="XP_024113396.2">
    <property type="nucleotide sequence ID" value="XM_024257628.3"/>
</dbReference>
<dbReference type="RefSeq" id="XP_024113398.2">
    <property type="nucleotide sequence ID" value="XM_024257630.3"/>
</dbReference>
<dbReference type="RefSeq" id="XP_024113399.2">
    <property type="nucleotide sequence ID" value="XM_024257631.3"/>
</dbReference>
<dbReference type="SMR" id="Q5R6L3"/>
<dbReference type="FunCoup" id="Q5R6L3">
    <property type="interactions" value="2012"/>
</dbReference>
<dbReference type="STRING" id="9601.ENSPPYP00000006314"/>
<dbReference type="GeneID" id="100173511"/>
<dbReference type="KEGG" id="pon:100173511"/>
<dbReference type="CTD" id="3981"/>
<dbReference type="eggNOG" id="KOG0966">
    <property type="taxonomic scope" value="Eukaryota"/>
</dbReference>
<dbReference type="InParanoid" id="Q5R6L3"/>
<dbReference type="OrthoDB" id="151490at2759"/>
<dbReference type="Proteomes" id="UP000001595">
    <property type="component" value="Unplaced"/>
</dbReference>
<dbReference type="GO" id="GO:0032807">
    <property type="term" value="C:DNA ligase IV complex"/>
    <property type="evidence" value="ECO:0007669"/>
    <property type="project" value="TreeGrafter"/>
</dbReference>
<dbReference type="GO" id="GO:0005958">
    <property type="term" value="C:DNA-dependent protein kinase-DNA ligase 4 complex"/>
    <property type="evidence" value="ECO:0000250"/>
    <property type="project" value="UniProtKB"/>
</dbReference>
<dbReference type="GO" id="GO:0070419">
    <property type="term" value="C:nonhomologous end joining complex"/>
    <property type="evidence" value="ECO:0000250"/>
    <property type="project" value="UniProtKB"/>
</dbReference>
<dbReference type="GO" id="GO:0005524">
    <property type="term" value="F:ATP binding"/>
    <property type="evidence" value="ECO:0007669"/>
    <property type="project" value="UniProtKB-KW"/>
</dbReference>
<dbReference type="GO" id="GO:0003677">
    <property type="term" value="F:DNA binding"/>
    <property type="evidence" value="ECO:0007669"/>
    <property type="project" value="InterPro"/>
</dbReference>
<dbReference type="GO" id="GO:0003910">
    <property type="term" value="F:DNA ligase (ATP) activity"/>
    <property type="evidence" value="ECO:0000250"/>
    <property type="project" value="UniProtKB"/>
</dbReference>
<dbReference type="GO" id="GO:0046872">
    <property type="term" value="F:metal ion binding"/>
    <property type="evidence" value="ECO:0007669"/>
    <property type="project" value="UniProtKB-KW"/>
</dbReference>
<dbReference type="GO" id="GO:0051301">
    <property type="term" value="P:cell division"/>
    <property type="evidence" value="ECO:0007669"/>
    <property type="project" value="UniProtKB-KW"/>
</dbReference>
<dbReference type="GO" id="GO:0071897">
    <property type="term" value="P:DNA biosynthetic process"/>
    <property type="evidence" value="ECO:0007669"/>
    <property type="project" value="InterPro"/>
</dbReference>
<dbReference type="GO" id="GO:0097680">
    <property type="term" value="P:double-strand break repair via classical nonhomologous end joining"/>
    <property type="evidence" value="ECO:0000250"/>
    <property type="project" value="UniProtKB"/>
</dbReference>
<dbReference type="GO" id="GO:0033152">
    <property type="term" value="P:immunoglobulin V(D)J recombination"/>
    <property type="evidence" value="ECO:0007669"/>
    <property type="project" value="TreeGrafter"/>
</dbReference>
<dbReference type="GO" id="GO:0006297">
    <property type="term" value="P:nucleotide-excision repair, DNA gap filling"/>
    <property type="evidence" value="ECO:0007669"/>
    <property type="project" value="TreeGrafter"/>
</dbReference>
<dbReference type="CDD" id="cd07903">
    <property type="entry name" value="Adenylation_DNA_ligase_IV"/>
    <property type="match status" value="1"/>
</dbReference>
<dbReference type="CDD" id="cd17722">
    <property type="entry name" value="BRCT_DNA_ligase_IV_rpt1"/>
    <property type="match status" value="1"/>
</dbReference>
<dbReference type="CDD" id="cd17717">
    <property type="entry name" value="BRCT_DNA_ligase_IV_rpt2"/>
    <property type="match status" value="1"/>
</dbReference>
<dbReference type="CDD" id="cd07968">
    <property type="entry name" value="OBF_DNA_ligase_IV"/>
    <property type="match status" value="1"/>
</dbReference>
<dbReference type="FunFam" id="1.10.3260.10:FF:000003">
    <property type="entry name" value="DNA ligase"/>
    <property type="match status" value="1"/>
</dbReference>
<dbReference type="FunFam" id="2.40.50.140:FF:000150">
    <property type="entry name" value="DNA ligase"/>
    <property type="match status" value="1"/>
</dbReference>
<dbReference type="FunFam" id="3.30.470.30:FF:000008">
    <property type="entry name" value="DNA ligase"/>
    <property type="match status" value="1"/>
</dbReference>
<dbReference type="FunFam" id="3.40.50.10190:FF:000027">
    <property type="entry name" value="DNA ligase"/>
    <property type="match status" value="1"/>
</dbReference>
<dbReference type="FunFam" id="3.40.50.10190:FF:000050">
    <property type="entry name" value="DNA ligase"/>
    <property type="match status" value="1"/>
</dbReference>
<dbReference type="Gene3D" id="6.10.250.520">
    <property type="match status" value="1"/>
</dbReference>
<dbReference type="Gene3D" id="3.40.50.10190">
    <property type="entry name" value="BRCT domain"/>
    <property type="match status" value="2"/>
</dbReference>
<dbReference type="Gene3D" id="1.10.3260.10">
    <property type="entry name" value="DNA ligase, ATP-dependent, N-terminal domain"/>
    <property type="match status" value="1"/>
</dbReference>
<dbReference type="Gene3D" id="3.30.470.30">
    <property type="entry name" value="DNA ligase/mRNA capping enzyme"/>
    <property type="match status" value="1"/>
</dbReference>
<dbReference type="Gene3D" id="2.40.50.140">
    <property type="entry name" value="Nucleic acid-binding proteins"/>
    <property type="match status" value="1"/>
</dbReference>
<dbReference type="InterPro" id="IPR044125">
    <property type="entry name" value="Adenylation_DNA_ligase_IV"/>
</dbReference>
<dbReference type="InterPro" id="IPR001357">
    <property type="entry name" value="BRCT_dom"/>
</dbReference>
<dbReference type="InterPro" id="IPR036420">
    <property type="entry name" value="BRCT_dom_sf"/>
</dbReference>
<dbReference type="InterPro" id="IPR000977">
    <property type="entry name" value="DNA_ligase_ATP-dep"/>
</dbReference>
<dbReference type="InterPro" id="IPR012309">
    <property type="entry name" value="DNA_ligase_ATP-dep_C"/>
</dbReference>
<dbReference type="InterPro" id="IPR012310">
    <property type="entry name" value="DNA_ligase_ATP-dep_cent"/>
</dbReference>
<dbReference type="InterPro" id="IPR016059">
    <property type="entry name" value="DNA_ligase_ATP-dep_CS"/>
</dbReference>
<dbReference type="InterPro" id="IPR012308">
    <property type="entry name" value="DNA_ligase_ATP-dep_N"/>
</dbReference>
<dbReference type="InterPro" id="IPR021536">
    <property type="entry name" value="DNA_ligase_IV_dom"/>
</dbReference>
<dbReference type="InterPro" id="IPR036599">
    <property type="entry name" value="DNA_ligase_N_sf"/>
</dbReference>
<dbReference type="InterPro" id="IPR029710">
    <property type="entry name" value="LIG4"/>
</dbReference>
<dbReference type="InterPro" id="IPR012340">
    <property type="entry name" value="NA-bd_OB-fold"/>
</dbReference>
<dbReference type="NCBIfam" id="TIGR00574">
    <property type="entry name" value="dnl1"/>
    <property type="match status" value="1"/>
</dbReference>
<dbReference type="PANTHER" id="PTHR45997">
    <property type="entry name" value="DNA LIGASE 4"/>
    <property type="match status" value="1"/>
</dbReference>
<dbReference type="PANTHER" id="PTHR45997:SF1">
    <property type="entry name" value="DNA LIGASE 4"/>
    <property type="match status" value="1"/>
</dbReference>
<dbReference type="Pfam" id="PF00533">
    <property type="entry name" value="BRCT"/>
    <property type="match status" value="2"/>
</dbReference>
<dbReference type="Pfam" id="PF04679">
    <property type="entry name" value="DNA_ligase_A_C"/>
    <property type="match status" value="1"/>
</dbReference>
<dbReference type="Pfam" id="PF01068">
    <property type="entry name" value="DNA_ligase_A_M"/>
    <property type="match status" value="1"/>
</dbReference>
<dbReference type="Pfam" id="PF04675">
    <property type="entry name" value="DNA_ligase_A_N"/>
    <property type="match status" value="1"/>
</dbReference>
<dbReference type="Pfam" id="PF11411">
    <property type="entry name" value="DNA_ligase_IV"/>
    <property type="match status" value="1"/>
</dbReference>
<dbReference type="SMART" id="SM00292">
    <property type="entry name" value="BRCT"/>
    <property type="match status" value="2"/>
</dbReference>
<dbReference type="SUPFAM" id="SSF117018">
    <property type="entry name" value="ATP-dependent DNA ligase DNA-binding domain"/>
    <property type="match status" value="1"/>
</dbReference>
<dbReference type="SUPFAM" id="SSF52113">
    <property type="entry name" value="BRCT domain"/>
    <property type="match status" value="2"/>
</dbReference>
<dbReference type="SUPFAM" id="SSF56091">
    <property type="entry name" value="DNA ligase/mRNA capping enzyme, catalytic domain"/>
    <property type="match status" value="1"/>
</dbReference>
<dbReference type="SUPFAM" id="SSF50249">
    <property type="entry name" value="Nucleic acid-binding proteins"/>
    <property type="match status" value="1"/>
</dbReference>
<dbReference type="PROSITE" id="PS50172">
    <property type="entry name" value="BRCT"/>
    <property type="match status" value="2"/>
</dbReference>
<dbReference type="PROSITE" id="PS00697">
    <property type="entry name" value="DNA_LIGASE_A1"/>
    <property type="match status" value="1"/>
</dbReference>
<dbReference type="PROSITE" id="PS00333">
    <property type="entry name" value="DNA_LIGASE_A2"/>
    <property type="match status" value="1"/>
</dbReference>
<dbReference type="PROSITE" id="PS50160">
    <property type="entry name" value="DNA_LIGASE_A3"/>
    <property type="match status" value="1"/>
</dbReference>
<proteinExistence type="evidence at transcript level"/>
<feature type="chain" id="PRO_0000059578" description="DNA ligase 4">
    <location>
        <begin position="1"/>
        <end position="911"/>
    </location>
</feature>
<feature type="domain" description="BRCT 1" evidence="4">
    <location>
        <begin position="654"/>
        <end position="743"/>
    </location>
</feature>
<feature type="domain" description="BRCT 2" evidence="4">
    <location>
        <begin position="808"/>
        <end position="911"/>
    </location>
</feature>
<feature type="region of interest" description="Required for catalytic activity" evidence="2">
    <location>
        <begin position="610"/>
        <end position="620"/>
    </location>
</feature>
<feature type="active site" description="N6-AMP-lysine intermediate" evidence="5">
    <location>
        <position position="273"/>
    </location>
</feature>
<feature type="binding site" evidence="2">
    <location>
        <position position="271"/>
    </location>
    <ligand>
        <name>ATP</name>
        <dbReference type="ChEBI" id="CHEBI:30616"/>
    </ligand>
</feature>
<feature type="binding site" evidence="2">
    <location>
        <position position="272"/>
    </location>
    <ligand>
        <name>ATP</name>
        <dbReference type="ChEBI" id="CHEBI:30616"/>
    </ligand>
</feature>
<feature type="binding site" evidence="2">
    <location>
        <position position="273"/>
    </location>
    <ligand>
        <name>ATP</name>
        <dbReference type="ChEBI" id="CHEBI:30616"/>
    </ligand>
</feature>
<feature type="binding site" evidence="2">
    <location>
        <position position="274"/>
    </location>
    <ligand>
        <name>ATP</name>
        <dbReference type="ChEBI" id="CHEBI:30616"/>
    </ligand>
</feature>
<feature type="binding site" evidence="1">
    <location>
        <position position="278"/>
    </location>
    <ligand>
        <name>ATP</name>
        <dbReference type="ChEBI" id="CHEBI:30616"/>
    </ligand>
</feature>
<feature type="binding site" evidence="1">
    <location>
        <position position="331"/>
    </location>
    <ligand>
        <name>ATP</name>
        <dbReference type="ChEBI" id="CHEBI:30616"/>
    </ligand>
</feature>
<feature type="binding site" evidence="3">
    <location>
        <position position="331"/>
    </location>
    <ligand>
        <name>Mg(2+)</name>
        <dbReference type="ChEBI" id="CHEBI:18420"/>
        <label>1</label>
    </ligand>
</feature>
<feature type="binding site" evidence="2">
    <location>
        <position position="345"/>
    </location>
    <ligand>
        <name>ATP</name>
        <dbReference type="ChEBI" id="CHEBI:30616"/>
    </ligand>
</feature>
<feature type="binding site" evidence="2">
    <location>
        <position position="367"/>
    </location>
    <ligand>
        <name>ATP</name>
        <dbReference type="ChEBI" id="CHEBI:30616"/>
    </ligand>
</feature>
<feature type="binding site" evidence="2">
    <location>
        <position position="427"/>
    </location>
    <ligand>
        <name>ATP</name>
        <dbReference type="ChEBI" id="CHEBI:30616"/>
    </ligand>
</feature>
<feature type="binding site" evidence="3">
    <location>
        <position position="427"/>
    </location>
    <ligand>
        <name>Mg(2+)</name>
        <dbReference type="ChEBI" id="CHEBI:18420"/>
        <label>2</label>
    </ligand>
</feature>
<feature type="binding site" evidence="1">
    <location>
        <position position="432"/>
    </location>
    <ligand>
        <name>ATP</name>
        <dbReference type="ChEBI" id="CHEBI:30616"/>
    </ligand>
</feature>
<feature type="binding site" evidence="1">
    <location>
        <position position="449"/>
    </location>
    <ligand>
        <name>ATP</name>
        <dbReference type="ChEBI" id="CHEBI:30616"/>
    </ligand>
</feature>
<feature type="binding site" evidence="2">
    <location>
        <position position="451"/>
    </location>
    <ligand>
        <name>ATP</name>
        <dbReference type="ChEBI" id="CHEBI:30616"/>
    </ligand>
</feature>
<keyword id="KW-0067">ATP-binding</keyword>
<keyword id="KW-0131">Cell cycle</keyword>
<keyword id="KW-0132">Cell division</keyword>
<keyword id="KW-0227">DNA damage</keyword>
<keyword id="KW-0233">DNA recombination</keyword>
<keyword id="KW-0234">DNA repair</keyword>
<keyword id="KW-0436">Ligase</keyword>
<keyword id="KW-0460">Magnesium</keyword>
<keyword id="KW-0479">Metal-binding</keyword>
<keyword id="KW-0547">Nucleotide-binding</keyword>
<keyword id="KW-0539">Nucleus</keyword>
<keyword id="KW-1185">Reference proteome</keyword>
<keyword id="KW-0677">Repeat</keyword>
<gene>
    <name evidence="2" type="primary">LIG4</name>
</gene>
<comment type="function">
    <text evidence="2">DNA ligase involved in DNA non-homologous end joining (NHEJ); required for double-strand break (DSB) repair and V(D)J recombination. Catalyzes the NHEJ ligation step of the broken DNA during DSB repair by resealing the DNA breaks after the gap filling is completed. Joins single-strand breaks in a double-stranded polydeoxynucleotide in an ATP-dependent reaction. LIG4 is mechanistically flexible: it can ligate nicks as well as compatible DNA overhangs alone, while in the presence of XRCC4, it can ligate ends with 2-nucleotides (nt) microhomology and 1-nt gaps. Forms a subcomplex with XRCC4; the LIG4-XRCC4 subcomplex is responsible for the NHEJ ligation step and XRCC4 enhances the joining activity of LIG4. Binding of the LIG4-XRCC4 complex to DNA ends is dependent on the assembly of the DNA-dependent protein kinase complex DNA-PK to these DNA ends. LIG4 regulates nuclear localization of XRCC4.</text>
</comment>
<comment type="catalytic activity">
    <reaction evidence="5">
        <text>ATP + (deoxyribonucleotide)n-3'-hydroxyl + 5'-phospho-(deoxyribonucleotide)m = (deoxyribonucleotide)n+m + AMP + diphosphate.</text>
        <dbReference type="EC" id="6.5.1.1"/>
    </reaction>
</comment>
<comment type="cofactor">
    <cofactor evidence="2">
        <name>Mg(2+)</name>
        <dbReference type="ChEBI" id="CHEBI:18420"/>
    </cofactor>
</comment>
<comment type="subunit">
    <text evidence="2">Interacts with XRCC4; the LIG4-XRCC4 subcomplex has a 1:2 stoichiometry and XRCC4 is required for LIG4 stability. Component of the core long-range non-homologous end joining (NHEJ) complex (also named DNA-PK complex) composed of PRKDC, LIG4, XRCC4, XRCC6/Ku70, XRCC5/Ku86 and NHEJ1/XLF. Additional component of the NHEJ complex includes PAXX. Following autophosphorylation, PRKDC dissociates from DNA, leading to formation of the short-range NHEJ complex, composed of LIG4, XRCC4, XRCC6/Ku70, XRCC5/Ku86 and NHEJ1/XLF. Interacts with DCLRE1C; the interaction is direct. Interacts with APLF.</text>
</comment>
<comment type="subcellular location">
    <subcellularLocation>
        <location evidence="2">Nucleus</location>
    </subcellularLocation>
</comment>
<comment type="similarity">
    <text evidence="6">Belongs to the ATP-dependent DNA ligase family.</text>
</comment>
<sequence>MAASQTSQTVASHVPFADLCSTLERIQKSKGRAEKIRHFREFLDSWRKFHDAFHKNQKDVTDSFYPAMRLILPQLERERMAYGIKETMLAKLYIELLNLPRDGKDALKLLNYRTPTGTHGDAGDFAMIAYFVLKPRCLQKGSLTIQQVNDLLDSIASNNSAKRKDLIKKSLLQLITQSSALEQKWLIRMIIKDLKLGVSQQTIFSVFHSDAVELHNVTTDLEKVCRQLHDPSVGLSDISITLFSAFKPMLAAIADIEHIEKDMKHQSFYIETKLDGERMQMHKDGDVYKYFSRNGYNYTDQFGASPTEGSLTPFIHNAFKTDIQICILDGEMMAYNPNTQTFMQKGTKFDIKRMVEDSDLQTCYCVFDVLMVNNKKLGHETLRKRYEILSSIFTPIPGRIEIVQKTQAHTKNEVIDALNEAIDKREEGIMIKQPLSIYKPDKRGEGWLKIKPEYVSGLMDELDILIVGGYWGKGSRGGMMSHFLCAVAEKPPPGEKPSVFHTLSRVGSGCTMKELYDLGLKLAKYWKPFHKKAPPSSILCGTEKPEVYIEPCNSVIVQIKAAEIVPSDMYKTGCTLRFPRIEKIRDDKEWHECMTLDDLEQLRGKASGKLASKHFYVGGDDEPQEKKRKAAPKMKKVIGIIEHLKAPNLTNVNKISNIFEDVEFCVMSGTDSQPKPDLENRIAEFGGYIVQNPGPDTYCVIAGSKNIRVKNIILSNKHDVVKPAWLLECFKTKSFVPWQPHFMIHMCPSTKEHFAREYDCYGDSYFVDTDLNQLKEVFSGIKNSNEQTPEEMASLIADLEYRYSWDCSPLSMFRRHTVYLDLYAVINDLSTKNEGTRLAIKALELRFHGAKVVSCLAEGVSHVIIGEDHSRIADFKAFRRTFKRKFKILKESWITDSIDKCELQEENQYLI</sequence>
<accession>Q5R6L3</accession>
<reference key="1">
    <citation type="submission" date="2004-11" db="EMBL/GenBank/DDBJ databases">
        <authorList>
            <consortium name="The German cDNA consortium"/>
        </authorList>
    </citation>
    <scope>NUCLEOTIDE SEQUENCE [LARGE SCALE MRNA]</scope>
    <source>
        <tissue>Brain cortex</tissue>
    </source>
</reference>
<organism>
    <name type="scientific">Pongo abelii</name>
    <name type="common">Sumatran orangutan</name>
    <name type="synonym">Pongo pygmaeus abelii</name>
    <dbReference type="NCBI Taxonomy" id="9601"/>
    <lineage>
        <taxon>Eukaryota</taxon>
        <taxon>Metazoa</taxon>
        <taxon>Chordata</taxon>
        <taxon>Craniata</taxon>
        <taxon>Vertebrata</taxon>
        <taxon>Euteleostomi</taxon>
        <taxon>Mammalia</taxon>
        <taxon>Eutheria</taxon>
        <taxon>Euarchontoglires</taxon>
        <taxon>Primates</taxon>
        <taxon>Haplorrhini</taxon>
        <taxon>Catarrhini</taxon>
        <taxon>Hominidae</taxon>
        <taxon>Pongo</taxon>
    </lineage>
</organism>
<protein>
    <recommendedName>
        <fullName evidence="6">DNA ligase 4</fullName>
        <ecNumber evidence="5">6.5.1.1</ecNumber>
    </recommendedName>
    <alternativeName>
        <fullName evidence="2">DNA ligase IV</fullName>
    </alternativeName>
    <alternativeName>
        <fullName>Polydeoxyribonucleotide synthase [ATP] 4</fullName>
    </alternativeName>
</protein>
<name>DNLI4_PONAB</name>